<name>ANTRL_MACFA</name>
<keyword id="KW-0472">Membrane</keyword>
<keyword id="KW-0479">Metal-binding</keyword>
<keyword id="KW-1185">Reference proteome</keyword>
<keyword id="KW-0732">Signal</keyword>
<keyword id="KW-0812">Transmembrane</keyword>
<keyword id="KW-1133">Transmembrane helix</keyword>
<feature type="signal peptide" evidence="2">
    <location>
        <begin position="1"/>
        <end position="25"/>
    </location>
</feature>
<feature type="chain" id="PRO_0000332167" description="Anthrax toxin receptor-like">
    <location>
        <begin position="26"/>
        <end position="557"/>
    </location>
</feature>
<feature type="topological domain" description="Extracellular" evidence="2">
    <location>
        <begin position="26"/>
        <end position="345"/>
    </location>
</feature>
<feature type="transmembrane region" description="Helical" evidence="2">
    <location>
        <begin position="346"/>
        <end position="366"/>
    </location>
</feature>
<feature type="topological domain" description="Cytoplasmic" evidence="2">
    <location>
        <begin position="367"/>
        <end position="557"/>
    </location>
</feature>
<feature type="domain" description="VWFA" evidence="3">
    <location>
        <begin position="74"/>
        <end position="244"/>
    </location>
</feature>
<feature type="region of interest" description="Disordered" evidence="4">
    <location>
        <begin position="380"/>
        <end position="411"/>
    </location>
</feature>
<feature type="region of interest" description="Disordered" evidence="4">
    <location>
        <begin position="497"/>
        <end position="557"/>
    </location>
</feature>
<feature type="compositionally biased region" description="Basic and acidic residues" evidence="4">
    <location>
        <begin position="386"/>
        <end position="395"/>
    </location>
</feature>
<feature type="compositionally biased region" description="Pro residues" evidence="4">
    <location>
        <begin position="396"/>
        <end position="411"/>
    </location>
</feature>
<feature type="compositionally biased region" description="Polar residues" evidence="4">
    <location>
        <begin position="534"/>
        <end position="557"/>
    </location>
</feature>
<feature type="binding site" evidence="1">
    <location>
        <position position="82"/>
    </location>
    <ligand>
        <name>a divalent metal cation</name>
        <dbReference type="ChEBI" id="CHEBI:60240"/>
    </ligand>
</feature>
<feature type="binding site" evidence="1">
    <location>
        <position position="84"/>
    </location>
    <ligand>
        <name>a divalent metal cation</name>
        <dbReference type="ChEBI" id="CHEBI:60240"/>
    </ligand>
</feature>
<feature type="binding site" evidence="1">
    <location>
        <position position="148"/>
    </location>
    <ligand>
        <name>a divalent metal cation</name>
        <dbReference type="ChEBI" id="CHEBI:60240"/>
    </ligand>
</feature>
<dbReference type="EMBL" id="AB168903">
    <property type="protein sequence ID" value="BAE01005.1"/>
    <property type="molecule type" value="mRNA"/>
</dbReference>
<dbReference type="SMR" id="Q4R7B7"/>
<dbReference type="STRING" id="9541.ENSMFAP00000013635"/>
<dbReference type="eggNOG" id="ENOG502QSKR">
    <property type="taxonomic scope" value="Eukaryota"/>
</dbReference>
<dbReference type="Proteomes" id="UP000233100">
    <property type="component" value="Unplaced"/>
</dbReference>
<dbReference type="GO" id="GO:0009986">
    <property type="term" value="C:cell surface"/>
    <property type="evidence" value="ECO:0007669"/>
    <property type="project" value="TreeGrafter"/>
</dbReference>
<dbReference type="GO" id="GO:0005886">
    <property type="term" value="C:plasma membrane"/>
    <property type="evidence" value="ECO:0007669"/>
    <property type="project" value="TreeGrafter"/>
</dbReference>
<dbReference type="GO" id="GO:0046872">
    <property type="term" value="F:metal ion binding"/>
    <property type="evidence" value="ECO:0007669"/>
    <property type="project" value="UniProtKB-KW"/>
</dbReference>
<dbReference type="GO" id="GO:0004888">
    <property type="term" value="F:transmembrane signaling receptor activity"/>
    <property type="evidence" value="ECO:0007669"/>
    <property type="project" value="TreeGrafter"/>
</dbReference>
<dbReference type="FunFam" id="3.40.50.410:FF:000024">
    <property type="entry name" value="Anthrax toxin receptor"/>
    <property type="match status" value="1"/>
</dbReference>
<dbReference type="Gene3D" id="3.40.50.410">
    <property type="entry name" value="von Willebrand factor, type A domain"/>
    <property type="match status" value="1"/>
</dbReference>
<dbReference type="InterPro" id="IPR008400">
    <property type="entry name" value="Anthrax_toxin_rcpt_extracel"/>
</dbReference>
<dbReference type="InterPro" id="IPR002035">
    <property type="entry name" value="VWF_A"/>
</dbReference>
<dbReference type="InterPro" id="IPR036465">
    <property type="entry name" value="vWFA_dom_sf"/>
</dbReference>
<dbReference type="PANTHER" id="PTHR16059">
    <property type="entry name" value="ANTHRAX TOXIN RECEPTOR"/>
    <property type="match status" value="1"/>
</dbReference>
<dbReference type="PANTHER" id="PTHR16059:SF16">
    <property type="entry name" value="ANTHRAX TOXIN RECEPTOR-LIKE"/>
    <property type="match status" value="1"/>
</dbReference>
<dbReference type="Pfam" id="PF05587">
    <property type="entry name" value="Anth_Ig"/>
    <property type="match status" value="1"/>
</dbReference>
<dbReference type="Pfam" id="PF00092">
    <property type="entry name" value="VWA"/>
    <property type="match status" value="1"/>
</dbReference>
<dbReference type="SMART" id="SM00327">
    <property type="entry name" value="VWA"/>
    <property type="match status" value="1"/>
</dbReference>
<dbReference type="SUPFAM" id="SSF53300">
    <property type="entry name" value="vWA-like"/>
    <property type="match status" value="1"/>
</dbReference>
<dbReference type="PROSITE" id="PS50234">
    <property type="entry name" value="VWFA"/>
    <property type="match status" value="1"/>
</dbReference>
<evidence type="ECO:0000250" key="1"/>
<evidence type="ECO:0000255" key="2"/>
<evidence type="ECO:0000255" key="3">
    <source>
        <dbReference type="PROSITE-ProRule" id="PRU00219"/>
    </source>
</evidence>
<evidence type="ECO:0000256" key="4">
    <source>
        <dbReference type="SAM" id="MobiDB-lite"/>
    </source>
</evidence>
<evidence type="ECO:0000305" key="5"/>
<gene>
    <name type="primary">ANTXRL</name>
    <name type="ORF">QtsA-15671</name>
</gene>
<proteinExistence type="evidence at transcript level"/>
<sequence>MRSHGRWGPCFLLFLLLLPPPLFRAGSLRYHGPGWRMFQRLALGSRRANHHHGPGWRQQLRQGQAGHRCQGSFDLYFILDKSGSVNNNWIDLYMWVEETVARFQSSDIRMCFITYSTDGQTVLPLTSDKNRIKNGLDQLRKIVPDGHTFMQAGFRKAIQQIETFNSGNKVPSMIIAMTDGELVAHAFQDTLREAQKARKLGANVYTVDVADYKLDQITAIADSPEHVFAVENGFKAMRDTVDALTSKVCLDVTSVEPPTVCVGEPYHVVVHGNGFQNLKKQDEVICRFIFNETTIVDEKPTSIDNNSMNCPGPKLEKPGEEYFIEVSLNNGKTFFKSNVSVTSSTCGIFSNWLYFLLPLLLLPLLLCCLWRLCRKKTVKEPPPVQKPEKEPEQEKPPPPPPPSPPPPLPPPPPPPPPVNTCPTVIVCCCACQGVCGIRGIEGNLDTFCDLSHPSCCQVPWMWCQRRDQGRYLSLALAQSQYAQAPCCPRIGFPHSQESPSLPETQPGVLFPSTDSVQPKELPSTWPAVPPHCSGTLQNPLCPSLPRSPTSKAPNTQD</sequence>
<reference key="1">
    <citation type="submission" date="2005-06" db="EMBL/GenBank/DDBJ databases">
        <title>DNA sequences of macaque genes expressed in brain or testis and its evolutionary implications.</title>
        <authorList>
            <consortium name="International consortium for macaque cDNA sequencing and analysis"/>
        </authorList>
    </citation>
    <scope>NUCLEOTIDE SEQUENCE [LARGE SCALE MRNA]</scope>
    <source>
        <tissue>Testis</tissue>
    </source>
</reference>
<organism>
    <name type="scientific">Macaca fascicularis</name>
    <name type="common">Crab-eating macaque</name>
    <name type="synonym">Cynomolgus monkey</name>
    <dbReference type="NCBI Taxonomy" id="9541"/>
    <lineage>
        <taxon>Eukaryota</taxon>
        <taxon>Metazoa</taxon>
        <taxon>Chordata</taxon>
        <taxon>Craniata</taxon>
        <taxon>Vertebrata</taxon>
        <taxon>Euteleostomi</taxon>
        <taxon>Mammalia</taxon>
        <taxon>Eutheria</taxon>
        <taxon>Euarchontoglires</taxon>
        <taxon>Primates</taxon>
        <taxon>Haplorrhini</taxon>
        <taxon>Catarrhini</taxon>
        <taxon>Cercopithecidae</taxon>
        <taxon>Cercopithecinae</taxon>
        <taxon>Macaca</taxon>
    </lineage>
</organism>
<accession>Q4R7B7</accession>
<comment type="subcellular location">
    <subcellularLocation>
        <location evidence="5">Membrane</location>
        <topology evidence="5">Single-pass type I membrane protein</topology>
    </subcellularLocation>
</comment>
<comment type="similarity">
    <text evidence="5">Belongs to the ATR family.</text>
</comment>
<protein>
    <recommendedName>
        <fullName>Anthrax toxin receptor-like</fullName>
    </recommendedName>
</protein>